<accession>P03670</accession>
<organismHost>
    <name type="scientific">Escherichia coli</name>
    <dbReference type="NCBI Taxonomy" id="562"/>
</organismHost>
<name>G5P_BPIKE</name>
<reference key="1">
    <citation type="journal article" date="1983" name="J. Mol. Biol.">
        <title>Characterization of the DNA binding protein encoded by the N-specific filamentous Escherichia coli phage IKe. Binding properties of the protein and nucleotide sequence of the gene.</title>
        <authorList>
            <person name="Peeters B.P.H."/>
            <person name="Konings R.N.H."/>
            <person name="Schoenmakers J.G.G."/>
        </authorList>
    </citation>
    <scope>NUCLEOTIDE SEQUENCE [GENOMIC DNA]</scope>
</reference>
<reference key="2">
    <citation type="journal article" date="1985" name="J. Mol. Biol.">
        <title>Nucleotide sequence and genetic organization of the genome of the N-specific filamentous bacteriophage IKe. Comparison with the genome of the F-specific filamentous phages M13, fd and f1.</title>
        <authorList>
            <person name="Peeters B.P.H."/>
            <person name="Peters R.M."/>
            <person name="Schoenmakers J.G.G."/>
            <person name="Konings R.N.H."/>
        </authorList>
    </citation>
    <scope>NUCLEOTIDE SEQUENCE [GENOMIC DNA]</scope>
</reference>
<reference key="3">
    <citation type="journal article" date="1987" name="Eur. J. Biochem.">
        <title>1H-NMR studies on the gene-5-encoded single-stranded DNA binding protein of the filamentous bacteriophage IKe. General spectral and structural features.</title>
        <authorList>
            <person name="de Jong E.A."/>
            <person name="Konings R.N.H."/>
            <person name="Harmsen B.J."/>
            <person name="Prinse C.W."/>
            <person name="Hilbers C.W."/>
        </authorList>
    </citation>
    <scope>STRUCTURE BY NMR</scope>
</reference>
<reference key="4">
    <citation type="journal article" date="1992" name="Biochemistry">
        <title>Assignment of the 1H NMR spectrum and secondary structure elucidation of the single-stranded DNA binding protein encoded by the filamentous bacteriophage IKe.</title>
        <authorList>
            <person name="van Duynhoven J.P.M."/>
            <person name="Folkers P.J.M."/>
            <person name="Prinse C.W."/>
            <person name="Harmsen B.J."/>
            <person name="Konings R.N.H."/>
            <person name="Hilbers C.W."/>
        </authorList>
    </citation>
    <scope>STRUCTURE BY NMR</scope>
</reference>
<reference key="5">
    <citation type="journal article" date="1987" name="J. Biomol. Struct. Dyn.">
        <title>A preliminary structure for the DNA binding protein from bacteriophage IKe.</title>
        <authorList>
            <person name="Brayer G.D."/>
        </authorList>
    </citation>
    <scope>3D-STRUCTURE MODELING</scope>
</reference>
<gene>
    <name type="primary">V</name>
</gene>
<sequence length="88" mass="9813">MLTVEIHDSQVSVKERSGVSQKSGKPYTIREQEAYIDLGGVYPALFNFNLEDGQQPYPAGKYRLHPASFKINNFGQVAVGRVLLESVK</sequence>
<feature type="chain" id="PRO_0000098199" description="DNA-Binding protein G5P">
    <location>
        <begin position="1"/>
        <end position="88"/>
    </location>
</feature>
<organism>
    <name type="scientific">Salmonella phage IKe</name>
    <name type="common">Bacteriophage IKe</name>
    <dbReference type="NCBI Taxonomy" id="10867"/>
    <lineage>
        <taxon>Viruses</taxon>
        <taxon>Monodnaviria</taxon>
        <taxon>Loebvirae</taxon>
        <taxon>Hofneiviricota</taxon>
        <taxon>Faserviricetes</taxon>
        <taxon>Tubulavirales</taxon>
        <taxon>Inoviridae</taxon>
        <taxon>Lineavirus</taxon>
        <taxon>Lineavirus IKe</taxon>
    </lineage>
</organism>
<comment type="function">
    <text evidence="1">Binds to DNA in a highly cooperative manner without pronounced sequence specificity. During synthesis of the single-stranded (progeny) viral DNA, prevents the conversion into the double-stranded replicative form. G5P is displaced by the capsid protein G8P during phage assembly on the inner bacterial membrane (By similarity).</text>
</comment>
<comment type="subunit">
    <text evidence="1">Homodimer.</text>
</comment>
<comment type="similarity">
    <text evidence="2">Belongs to the inovirus G5P protein family.</text>
</comment>
<keyword id="KW-0235">DNA replication</keyword>
<keyword id="KW-0238">DNA-binding</keyword>
<keyword id="KW-1185">Reference proteome</keyword>
<evidence type="ECO:0000250" key="1"/>
<evidence type="ECO:0000305" key="2"/>
<dbReference type="EMBL" id="X01914">
    <property type="protein sequence ID" value="CAA25988.1"/>
    <property type="molecule type" value="Genomic_DNA"/>
</dbReference>
<dbReference type="EMBL" id="X02139">
    <property type="protein sequence ID" value="CAA26069.1"/>
    <property type="molecule type" value="Genomic_DNA"/>
</dbReference>
<dbReference type="PIR" id="A04272">
    <property type="entry name" value="DDBPIK"/>
</dbReference>
<dbReference type="RefSeq" id="NP_040572.1">
    <property type="nucleotide sequence ID" value="NC_002014.1"/>
</dbReference>
<dbReference type="BMRB" id="P03670"/>
<dbReference type="SMR" id="P03670"/>
<dbReference type="KEGG" id="vg:1260891"/>
<dbReference type="OrthoDB" id="39007at10239"/>
<dbReference type="Proteomes" id="UP000000372">
    <property type="component" value="Genome"/>
</dbReference>
<dbReference type="GO" id="GO:0003697">
    <property type="term" value="F:single-stranded DNA binding"/>
    <property type="evidence" value="ECO:0007669"/>
    <property type="project" value="InterPro"/>
</dbReference>
<dbReference type="GO" id="GO:0006260">
    <property type="term" value="P:DNA replication"/>
    <property type="evidence" value="ECO:0007669"/>
    <property type="project" value="UniProtKB-KW"/>
</dbReference>
<dbReference type="Gene3D" id="2.40.50.140">
    <property type="entry name" value="Nucleic acid-binding proteins"/>
    <property type="match status" value="1"/>
</dbReference>
<dbReference type="InterPro" id="IPR012340">
    <property type="entry name" value="NA-bd_OB-fold"/>
</dbReference>
<dbReference type="InterPro" id="IPR003512">
    <property type="entry name" value="Phage_M13_G5P_DNA-bd"/>
</dbReference>
<dbReference type="Pfam" id="PF02303">
    <property type="entry name" value="Phage_DNA_bind"/>
    <property type="match status" value="1"/>
</dbReference>
<dbReference type="SUPFAM" id="SSF50249">
    <property type="entry name" value="Nucleic acid-binding proteins"/>
    <property type="match status" value="1"/>
</dbReference>
<proteinExistence type="evidence at protein level"/>
<protein>
    <recommendedName>
        <fullName>DNA-Binding protein G5P</fullName>
        <shortName>G5P</shortName>
    </recommendedName>
    <alternativeName>
        <fullName>GPV</fullName>
    </alternativeName>
    <alternativeName>
        <fullName>Single-stranded DNA-binding protein</fullName>
    </alternativeName>
</protein>